<reference key="1">
    <citation type="journal article" date="1997" name="Mol. Microbiol.">
        <title>Identification of novel intergenic repetitive units in a mycobacterial two-component system operon.</title>
        <authorList>
            <person name="Supply P."/>
            <person name="Magdalena J."/>
            <person name="Himpens S."/>
            <person name="Locht C."/>
        </authorList>
    </citation>
    <scope>NUCLEOTIDE SEQUENCE [GENOMIC DNA]</scope>
    <scope>OPERON</scope>
    <source>
        <strain>2296207</strain>
    </source>
</reference>
<reference key="2">
    <citation type="journal article" date="1998" name="Nature">
        <title>Deciphering the biology of Mycobacterium tuberculosis from the complete genome sequence.</title>
        <authorList>
            <person name="Cole S.T."/>
            <person name="Brosch R."/>
            <person name="Parkhill J."/>
            <person name="Garnier T."/>
            <person name="Churcher C.M."/>
            <person name="Harris D.E."/>
            <person name="Gordon S.V."/>
            <person name="Eiglmeier K."/>
            <person name="Gas S."/>
            <person name="Barry C.E. III"/>
            <person name="Tekaia F."/>
            <person name="Badcock K."/>
            <person name="Basham D."/>
            <person name="Brown D."/>
            <person name="Chillingworth T."/>
            <person name="Connor R."/>
            <person name="Davies R.M."/>
            <person name="Devlin K."/>
            <person name="Feltwell T."/>
            <person name="Gentles S."/>
            <person name="Hamlin N."/>
            <person name="Holroyd S."/>
            <person name="Hornsby T."/>
            <person name="Jagels K."/>
            <person name="Krogh A."/>
            <person name="McLean J."/>
            <person name="Moule S."/>
            <person name="Murphy L.D."/>
            <person name="Oliver S."/>
            <person name="Osborne J."/>
            <person name="Quail M.A."/>
            <person name="Rajandream M.A."/>
            <person name="Rogers J."/>
            <person name="Rutter S."/>
            <person name="Seeger K."/>
            <person name="Skelton S."/>
            <person name="Squares S."/>
            <person name="Squares R."/>
            <person name="Sulston J.E."/>
            <person name="Taylor K."/>
            <person name="Whitehead S."/>
            <person name="Barrell B.G."/>
        </authorList>
    </citation>
    <scope>NUCLEOTIDE SEQUENCE [LARGE SCALE GENOMIC DNA]</scope>
    <source>
        <strain>ATCC 25618 / H37Rv</strain>
    </source>
</reference>
<reference key="3">
    <citation type="journal article" date="2003" name="Microbiology">
        <title>The senX3-regX3 two-component regulatory system of Mycobacterium tuberculosis is required for virulence.</title>
        <authorList>
            <person name="Parish T."/>
            <person name="Smith D.A."/>
            <person name="Roberts G."/>
            <person name="Betts J."/>
            <person name="Stoker N.G."/>
        </authorList>
    </citation>
    <scope>FUNCTION</scope>
    <scope>DISRUPTION PHENOTYPE</scope>
    <source>
        <strain>H37Rv</strain>
    </source>
</reference>
<reference key="4">
    <citation type="journal article" date="2011" name="Mol. Cell. Proteomics">
        <title>Proteogenomic analysis of Mycobacterium tuberculosis by high resolution mass spectrometry.</title>
        <authorList>
            <person name="Kelkar D.S."/>
            <person name="Kumar D."/>
            <person name="Kumar P."/>
            <person name="Balakrishnan L."/>
            <person name="Muthusamy B."/>
            <person name="Yadav A.K."/>
            <person name="Shrivastava P."/>
            <person name="Marimuthu A."/>
            <person name="Anand S."/>
            <person name="Sundaram H."/>
            <person name="Kingsbury R."/>
            <person name="Harsha H.C."/>
            <person name="Nair B."/>
            <person name="Prasad T.S."/>
            <person name="Chauhan D.S."/>
            <person name="Katoch K."/>
            <person name="Katoch V.M."/>
            <person name="Kumar P."/>
            <person name="Chaerkady R."/>
            <person name="Ramachandran S."/>
            <person name="Dash D."/>
            <person name="Pandey A."/>
        </authorList>
    </citation>
    <scope>IDENTIFICATION BY MASS SPECTROMETRY [LARGE SCALE ANALYSIS]</scope>
    <source>
        <strain>ATCC 25618 / H37Rv</strain>
    </source>
</reference>
<reference key="5">
    <citation type="journal article" date="2011" name="PLoS ONE">
        <title>Control of CydB and GltA1 expression by the SenX3 RegX3 two component regulatory system of Mycobacterium tuberculosis.</title>
        <authorList>
            <person name="Roberts G."/>
            <person name="Vadrevu I.S."/>
            <person name="Madiraju M.V."/>
            <person name="Parish T."/>
        </authorList>
    </citation>
    <scope>FUNCTION</scope>
    <scope>DNA-BINDING</scope>
    <scope>ACTIVITY REGULATION</scope>
    <source>
        <strain>H37Rv</strain>
    </source>
</reference>
<reference key="6">
    <citation type="journal article" date="2017" name="MBio">
        <title>Mycobacterium tuberculosis PhoY proteins promote persister formation by mediating Pst/SenX3-RegX3 phosphate sensing.</title>
        <authorList>
            <person name="Namugenyi S.B."/>
            <person name="Aagesen A.M."/>
            <person name="Elliott S.R."/>
            <person name="Tischler A.D."/>
        </authorList>
    </citation>
    <scope>FUNCTION</scope>
    <scope>ACTIVITY REGULATION</scope>
    <source>
        <strain>Erdman</strain>
    </source>
</reference>
<reference key="7">
    <citation type="journal article" date="2019" name="J. Biol. Chem.">
        <title>Dual control of RegX3 transcriptional activity by SenX3 and PknB.</title>
        <authorList>
            <person name="Park E.J."/>
            <person name="Kwon Y.M."/>
            <person name="Lee J.W."/>
            <person name="Kang H.Y."/>
            <person name="Oh J.I."/>
        </authorList>
    </citation>
    <scope>ACTIVITY REGULATION</scope>
    <scope>PHOSPHORYLATION AT THR-100; THR-191 AND THR-217</scope>
    <scope>MUTAGENESIS OF THR-29; THR-100; THR-151; THR-191; THR-193 AND THR-217</scope>
</reference>
<reference key="8">
    <citation type="journal article" date="2022" name="Microbiology">
        <title>A systems approach to decipher a role of transcription factor RegX3 in the adaptation of Mycobacterium tuberculosis to hypoxic stress.</title>
        <authorList>
            <person name="Mahatha A.C."/>
            <person name="Banerjee S.K."/>
            <person name="Ghosh A."/>
            <person name="Lata S."/>
            <person name="Saha S."/>
            <person name="Basu J."/>
            <person name="Kundu M."/>
        </authorList>
    </citation>
    <scope>FUNCTION</scope>
    <scope>DNA-BINDING</scope>
    <scope>INDUCTION</scope>
    <scope>DISRUPTION PHENOTYPE</scope>
    <scope>MUTAGENESIS OF ASP-52</scope>
    <source>
        <strain>H37Rv</strain>
    </source>
</reference>
<reference evidence="13" key="9">
    <citation type="journal article" date="2007" name="J. Biol. Chem.">
        <title>The structure of a full-length response regulator from Mycobacterium tuberculosis in a stabilized three-dimensional domain-swapped, activated state.</title>
        <authorList>
            <person name="King-Scott J."/>
            <person name="Nowak E."/>
            <person name="Mylonas E."/>
            <person name="Panjikar S."/>
            <person name="Roessle M."/>
            <person name="Svergun D.I."/>
            <person name="Tucker P.A."/>
        </authorList>
    </citation>
    <scope>X-RAY CRYSTALLOGRAPHY (2.03 ANGSTROMS) OF 2-227</scope>
    <scope>SUBUNIT</scope>
    <source>
        <strain>H37Rv</strain>
    </source>
</reference>
<evidence type="ECO:0000250" key="1">
    <source>
        <dbReference type="UniProtKB" id="O07130"/>
    </source>
</evidence>
<evidence type="ECO:0000255" key="2">
    <source>
        <dbReference type="PROSITE-ProRule" id="PRU00169"/>
    </source>
</evidence>
<evidence type="ECO:0000255" key="3">
    <source>
        <dbReference type="PROSITE-ProRule" id="PRU01091"/>
    </source>
</evidence>
<evidence type="ECO:0000269" key="4">
    <source>
    </source>
</evidence>
<evidence type="ECO:0000269" key="5">
    <source>
    </source>
</evidence>
<evidence type="ECO:0000269" key="6">
    <source>
    </source>
</evidence>
<evidence type="ECO:0000269" key="7">
    <source>
    </source>
</evidence>
<evidence type="ECO:0000269" key="8">
    <source>
    </source>
</evidence>
<evidence type="ECO:0000269" key="9">
    <source>
    </source>
</evidence>
<evidence type="ECO:0000269" key="10">
    <source>
    </source>
</evidence>
<evidence type="ECO:0000303" key="11">
    <source>
    </source>
</evidence>
<evidence type="ECO:0000305" key="12"/>
<evidence type="ECO:0007744" key="13">
    <source>
        <dbReference type="PDB" id="2OQR"/>
    </source>
</evidence>
<evidence type="ECO:0007829" key="14">
    <source>
        <dbReference type="PDB" id="2OQR"/>
    </source>
</evidence>
<proteinExistence type="evidence at protein level"/>
<sequence length="227" mass="24849">MTSVLIVEDEESLADPLAFLLRKEGFEATVVTDGPAALAEFDRAGADIVLLDLMLPGMSGTDVCKQLRARSSVPVIMVTARDSEIDKVVGLELGADDYVTKPYSARELIARIRAVLRRGGDDDSEMSDGVLESGPVRMDVERHVVSVNGDTITLPLKEFDLLEYLMRNSGRVLTRGQLIDRVWGADYVGDTKTLDVHVKRLRSKIEADPANPVHLVTVRGLGYKLEG</sequence>
<protein>
    <recommendedName>
        <fullName evidence="12">Sensory transduction protein RegX3</fullName>
    </recommendedName>
</protein>
<gene>
    <name evidence="11" type="primary">regX3</name>
    <name type="ordered locus">Rv0491</name>
    <name type="ORF">MTCY20G9.17</name>
</gene>
<comment type="function">
    <text evidence="4 6 7 9">Member of the two-component regulatory system SenX3/RegX3 involved in stress response (PubMed:12777483, PubMed:21698211, PubMed:35980355). The system is involved in phosphate starvation response (PubMed:28698272). Plays a role in modulating expression of aerobic response and in the regulation of response to hypoxia (PubMed:21698211, PubMed:35980355). Involved in virulence (PubMed:12777483). Regulates dozens of genes, directly or indirectly (PubMed:12777483, PubMed:35980355). Is directly involved in the regulation of the expression of gltA, cydAB and ald (PubMed:21698211). Binds to the upstream regions of the hypoxia-associated genes Rv3334, whiB7, Rv0195, Rv0196 and Rv1960c (PubMed:35980355).</text>
</comment>
<comment type="activity regulation">
    <text evidence="6 7 8">Phosphorylation by SenX3 stimulates binding to the target promoters (PubMed:21698211). Activation of the SenX3-RegX3 two-component system is inhibited by PhoY1 and PhoY2 when phosphate is readily available (PubMed:28698272). Overexpression of the kinase domain of PknB (PknB-KDMtb) inhibits the transcriptional activity of RegX3 by phosphorylating Thr-100, Thr-191 and Thr-217 (PubMed:31160336). Phosphorylation at Thr-191 and Thr-217 abolishes the DNA-binding ability of RegX3 and phosphorylation at Thr-100 likely prevents RegX3 from being activated through conformational changes induced by SenX3-mediated phosphorylation (PubMed:31160336).</text>
</comment>
<comment type="subunit">
    <text evidence="5">Homodimer in active state (PubMed:17942407). In solution, exists as both a monomer and a dimer in a concentration-dependent equilibrium (PubMed:17942407).</text>
</comment>
<comment type="induction">
    <text evidence="9 10">Part of the senX3-regX3 operon (PubMed:9426136). The two genes are separated by a rather long intercistronic region composed of a class of duplicated sequences named mycobacterial interspersed repetitive units (MIRUs) (PubMed:9426136). Significantly up-regulated after 28 days of hypoxia (PubMed:35980355).</text>
</comment>
<comment type="PTM">
    <text evidence="1 8">Phosphorylated by SenX3 (By similarity). Phosphorylated and inhibited by PknB (PubMed:31160336).</text>
</comment>
<comment type="disruption phenotype">
    <text evidence="4 9">The senX3-regX3 deletion mutant shows a growth defect after infection of macrophages and is attenuated in both immunodeficient and immunocompetent mice (PubMed:12777483). Deletion of the gene leads to differential regulation of a set of genes involved in, among others, cell wall and cell processes, intermediary metabolism, respiration, virulence and transcriptional regulation (PubMed:35980355). Deletion mutant is attenuated in terms of its ability to withstand hypoxia (PubMed:35980355).</text>
</comment>
<keyword id="KW-0002">3D-structure</keyword>
<keyword id="KW-0238">DNA-binding</keyword>
<keyword id="KW-0597">Phosphoprotein</keyword>
<keyword id="KW-1185">Reference proteome</keyword>
<keyword id="KW-0346">Stress response</keyword>
<keyword id="KW-0804">Transcription</keyword>
<keyword id="KW-0805">Transcription regulation</keyword>
<keyword id="KW-0902">Two-component regulatory system</keyword>
<keyword id="KW-0843">Virulence</keyword>
<dbReference type="EMBL" id="Y13628">
    <property type="protein sequence ID" value="CAA73958.1"/>
    <property type="molecule type" value="Genomic_DNA"/>
</dbReference>
<dbReference type="EMBL" id="AL123456">
    <property type="protein sequence ID" value="CCP43225.1"/>
    <property type="molecule type" value="Genomic_DNA"/>
</dbReference>
<dbReference type="PIR" id="F70744">
    <property type="entry name" value="F70744"/>
</dbReference>
<dbReference type="RefSeq" id="NP_215005.1">
    <property type="nucleotide sequence ID" value="NC_000962.3"/>
</dbReference>
<dbReference type="PDB" id="2OQR">
    <property type="method" value="X-ray"/>
    <property type="resolution" value="2.03 A"/>
    <property type="chains" value="A=2-227"/>
</dbReference>
<dbReference type="PDBsum" id="2OQR"/>
<dbReference type="SMR" id="P9WGL9"/>
<dbReference type="FunCoup" id="P9WGL9">
    <property type="interactions" value="96"/>
</dbReference>
<dbReference type="STRING" id="83332.Rv0491"/>
<dbReference type="iPTMnet" id="P9WGL9"/>
<dbReference type="PaxDb" id="83332-Rv0491"/>
<dbReference type="DNASU" id="887195"/>
<dbReference type="GeneID" id="887195"/>
<dbReference type="KEGG" id="mtu:Rv0491"/>
<dbReference type="KEGG" id="mtv:RVBD_0491"/>
<dbReference type="TubercuList" id="Rv0491"/>
<dbReference type="eggNOG" id="COG0745">
    <property type="taxonomic scope" value="Bacteria"/>
</dbReference>
<dbReference type="InParanoid" id="P9WGL9"/>
<dbReference type="OrthoDB" id="9790442at2"/>
<dbReference type="PhylomeDB" id="P9WGL9"/>
<dbReference type="EvolutionaryTrace" id="P9WGL9"/>
<dbReference type="Proteomes" id="UP000001584">
    <property type="component" value="Chromosome"/>
</dbReference>
<dbReference type="GO" id="GO:0005829">
    <property type="term" value="C:cytosol"/>
    <property type="evidence" value="ECO:0000318"/>
    <property type="project" value="GO_Central"/>
</dbReference>
<dbReference type="GO" id="GO:0032993">
    <property type="term" value="C:protein-DNA complex"/>
    <property type="evidence" value="ECO:0000318"/>
    <property type="project" value="GO_Central"/>
</dbReference>
<dbReference type="GO" id="GO:0003677">
    <property type="term" value="F:DNA binding"/>
    <property type="evidence" value="ECO:0000314"/>
    <property type="project" value="MTBBASE"/>
</dbReference>
<dbReference type="GO" id="GO:0000156">
    <property type="term" value="F:phosphorelay response regulator activity"/>
    <property type="evidence" value="ECO:0000318"/>
    <property type="project" value="GO_Central"/>
</dbReference>
<dbReference type="GO" id="GO:0000976">
    <property type="term" value="F:transcription cis-regulatory region binding"/>
    <property type="evidence" value="ECO:0000318"/>
    <property type="project" value="GO_Central"/>
</dbReference>
<dbReference type="GO" id="GO:0000160">
    <property type="term" value="P:phosphorelay signal transduction system"/>
    <property type="evidence" value="ECO:0000314"/>
    <property type="project" value="UniProtKB"/>
</dbReference>
<dbReference type="GO" id="GO:0006355">
    <property type="term" value="P:regulation of DNA-templated transcription"/>
    <property type="evidence" value="ECO:0000314"/>
    <property type="project" value="MTBBASE"/>
</dbReference>
<dbReference type="GO" id="GO:0019220">
    <property type="term" value="P:regulation of phosphate metabolic process"/>
    <property type="evidence" value="ECO:0000314"/>
    <property type="project" value="MTBBASE"/>
</dbReference>
<dbReference type="CDD" id="cd17621">
    <property type="entry name" value="REC_OmpR_RegX3-like"/>
    <property type="match status" value="1"/>
</dbReference>
<dbReference type="CDD" id="cd00383">
    <property type="entry name" value="trans_reg_C"/>
    <property type="match status" value="1"/>
</dbReference>
<dbReference type="FunFam" id="3.40.50.2300:FF:000001">
    <property type="entry name" value="DNA-binding response regulator PhoB"/>
    <property type="match status" value="1"/>
</dbReference>
<dbReference type="FunFam" id="1.10.10.10:FF:000110">
    <property type="entry name" value="DNA-binding response regulator RegX3"/>
    <property type="match status" value="1"/>
</dbReference>
<dbReference type="Gene3D" id="3.40.50.2300">
    <property type="match status" value="1"/>
</dbReference>
<dbReference type="Gene3D" id="6.10.250.690">
    <property type="match status" value="1"/>
</dbReference>
<dbReference type="Gene3D" id="1.10.10.10">
    <property type="entry name" value="Winged helix-like DNA-binding domain superfamily/Winged helix DNA-binding domain"/>
    <property type="match status" value="1"/>
</dbReference>
<dbReference type="InterPro" id="IPR011006">
    <property type="entry name" value="CheY-like_superfamily"/>
</dbReference>
<dbReference type="InterPro" id="IPR001867">
    <property type="entry name" value="OmpR/PhoB-type_DNA-bd"/>
</dbReference>
<dbReference type="InterPro" id="IPR016032">
    <property type="entry name" value="Sig_transdc_resp-reg_C-effctor"/>
</dbReference>
<dbReference type="InterPro" id="IPR001789">
    <property type="entry name" value="Sig_transdc_resp-reg_receiver"/>
</dbReference>
<dbReference type="InterPro" id="IPR039420">
    <property type="entry name" value="WalR-like"/>
</dbReference>
<dbReference type="InterPro" id="IPR036388">
    <property type="entry name" value="WH-like_DNA-bd_sf"/>
</dbReference>
<dbReference type="PANTHER" id="PTHR48111">
    <property type="entry name" value="REGULATOR OF RPOS"/>
    <property type="match status" value="1"/>
</dbReference>
<dbReference type="PANTHER" id="PTHR48111:SF72">
    <property type="entry name" value="SENSORY TRANSDUCTION PROTEIN REGX3"/>
    <property type="match status" value="1"/>
</dbReference>
<dbReference type="Pfam" id="PF00072">
    <property type="entry name" value="Response_reg"/>
    <property type="match status" value="1"/>
</dbReference>
<dbReference type="Pfam" id="PF00486">
    <property type="entry name" value="Trans_reg_C"/>
    <property type="match status" value="1"/>
</dbReference>
<dbReference type="SMART" id="SM00448">
    <property type="entry name" value="REC"/>
    <property type="match status" value="1"/>
</dbReference>
<dbReference type="SMART" id="SM00862">
    <property type="entry name" value="Trans_reg_C"/>
    <property type="match status" value="1"/>
</dbReference>
<dbReference type="SUPFAM" id="SSF46894">
    <property type="entry name" value="C-terminal effector domain of the bipartite response regulators"/>
    <property type="match status" value="1"/>
</dbReference>
<dbReference type="SUPFAM" id="SSF52172">
    <property type="entry name" value="CheY-like"/>
    <property type="match status" value="1"/>
</dbReference>
<dbReference type="PROSITE" id="PS51755">
    <property type="entry name" value="OMPR_PHOB"/>
    <property type="match status" value="1"/>
</dbReference>
<dbReference type="PROSITE" id="PS50110">
    <property type="entry name" value="RESPONSE_REGULATORY"/>
    <property type="match status" value="1"/>
</dbReference>
<name>REGX3_MYCTU</name>
<feature type="chain" id="PRO_0000081334" description="Sensory transduction protein RegX3">
    <location>
        <begin position="1"/>
        <end position="227"/>
    </location>
</feature>
<feature type="domain" description="Response regulatory" evidence="2">
    <location>
        <begin position="3"/>
        <end position="116"/>
    </location>
</feature>
<feature type="DNA-binding region" description="OmpR/PhoB-type" evidence="3">
    <location>
        <begin position="128"/>
        <end position="227"/>
    </location>
</feature>
<feature type="modified residue" description="4-aspartylphosphate" evidence="2">
    <location>
        <position position="52"/>
    </location>
</feature>
<feature type="modified residue" description="Phosphothreonine; by PknB; in inhibited form" evidence="8">
    <location>
        <position position="100"/>
    </location>
</feature>
<feature type="modified residue" description="Phosphothreonine; by PknB; in inhibited form" evidence="8">
    <location>
        <position position="191"/>
    </location>
</feature>
<feature type="modified residue" description="Phosphothreonine; by PknB; in inhibited form" evidence="8">
    <location>
        <position position="217"/>
    </location>
</feature>
<feature type="mutagenesis site" description="Does not affect phosphorylation by PknB. Does not affect transcriptional activity." evidence="8">
    <original>T</original>
    <variation>E</variation>
    <location>
        <position position="29"/>
    </location>
</feature>
<feature type="mutagenesis site" description="Cannot complement the deletion mutant." evidence="9">
    <original>D</original>
    <variation>N</variation>
    <location>
        <position position="52"/>
    </location>
</feature>
<feature type="mutagenesis site" description="Significantly reduces phosphorylation by PknB. Inactivates transcriptional activity." evidence="8">
    <original>T</original>
    <variation>E</variation>
    <location>
        <position position="100"/>
    </location>
</feature>
<feature type="mutagenesis site" description="Does not affect phosphorylation by PknB. Does not affect transcriptional activity." evidence="8">
    <original>T</original>
    <variation>E</variation>
    <location>
        <position position="151"/>
    </location>
</feature>
<feature type="mutagenesis site" description="Significantly reduces phosphorylation by PknB. Inactivates transcriptional activity. Significantly reduces the binding affinity of RegX3 for its target DNA sequence." evidence="8">
    <original>T</original>
    <variation>E</variation>
    <location>
        <position position="191"/>
    </location>
</feature>
<feature type="mutagenesis site" description="Does not affect phosphorylation by PknB. Inactivates transcriptional activity." evidence="8">
    <original>T</original>
    <variation>E</variation>
    <location>
        <position position="193"/>
    </location>
</feature>
<feature type="mutagenesis site" description="Slightly reduces phosphorylation by PknB. Inactivates transcriptional activity. Significantly reduces the binding affinity of RegX3 for its target DNA sequence." evidence="8">
    <original>T</original>
    <variation>E</variation>
    <location>
        <position position="217"/>
    </location>
</feature>
<feature type="strand" evidence="14">
    <location>
        <begin position="3"/>
        <end position="7"/>
    </location>
</feature>
<feature type="helix" evidence="14">
    <location>
        <begin position="11"/>
        <end position="23"/>
    </location>
</feature>
<feature type="strand" evidence="14">
    <location>
        <begin position="27"/>
        <end position="31"/>
    </location>
</feature>
<feature type="helix" evidence="14">
    <location>
        <begin position="34"/>
        <end position="44"/>
    </location>
</feature>
<feature type="strand" evidence="14">
    <location>
        <begin position="47"/>
        <end position="54"/>
    </location>
</feature>
<feature type="strand" evidence="14">
    <location>
        <begin position="56"/>
        <end position="58"/>
    </location>
</feature>
<feature type="helix" evidence="14">
    <location>
        <begin position="60"/>
        <end position="70"/>
    </location>
</feature>
<feature type="strand" evidence="14">
    <location>
        <begin position="74"/>
        <end position="79"/>
    </location>
</feature>
<feature type="helix" evidence="14">
    <location>
        <begin position="82"/>
        <end position="93"/>
    </location>
</feature>
<feature type="helix" evidence="14">
    <location>
        <begin position="105"/>
        <end position="116"/>
    </location>
</feature>
<feature type="turn" evidence="14">
    <location>
        <begin position="117"/>
        <end position="120"/>
    </location>
</feature>
<feature type="strand" evidence="14">
    <location>
        <begin position="131"/>
        <end position="133"/>
    </location>
</feature>
<feature type="strand" evidence="14">
    <location>
        <begin position="136"/>
        <end position="139"/>
    </location>
</feature>
<feature type="turn" evidence="14">
    <location>
        <begin position="140"/>
        <end position="143"/>
    </location>
</feature>
<feature type="strand" evidence="14">
    <location>
        <begin position="144"/>
        <end position="150"/>
    </location>
</feature>
<feature type="helix" evidence="14">
    <location>
        <begin position="156"/>
        <end position="167"/>
    </location>
</feature>
<feature type="turn" evidence="14">
    <location>
        <begin position="168"/>
        <end position="170"/>
    </location>
</feature>
<feature type="helix" evidence="14">
    <location>
        <begin position="175"/>
        <end position="182"/>
    </location>
</feature>
<feature type="helix" evidence="14">
    <location>
        <begin position="190"/>
        <end position="205"/>
    </location>
</feature>
<feature type="strand" evidence="14">
    <location>
        <begin position="207"/>
        <end position="211"/>
    </location>
</feature>
<feature type="strand" evidence="14">
    <location>
        <begin position="213"/>
        <end position="218"/>
    </location>
</feature>
<feature type="turn" evidence="14">
    <location>
        <begin position="219"/>
        <end position="221"/>
    </location>
</feature>
<feature type="strand" evidence="14">
    <location>
        <begin position="222"/>
        <end position="225"/>
    </location>
</feature>
<organism>
    <name type="scientific">Mycobacterium tuberculosis (strain ATCC 25618 / H37Rv)</name>
    <dbReference type="NCBI Taxonomy" id="83332"/>
    <lineage>
        <taxon>Bacteria</taxon>
        <taxon>Bacillati</taxon>
        <taxon>Actinomycetota</taxon>
        <taxon>Actinomycetes</taxon>
        <taxon>Mycobacteriales</taxon>
        <taxon>Mycobacteriaceae</taxon>
        <taxon>Mycobacterium</taxon>
        <taxon>Mycobacterium tuberculosis complex</taxon>
    </lineage>
</organism>
<accession>P9WGL9</accession>
<accession>L0T3S2</accession>
<accession>Q11156</accession>